<keyword id="KW-0997">Cell inner membrane</keyword>
<keyword id="KW-1003">Cell membrane</keyword>
<keyword id="KW-0328">Glycosyltransferase</keyword>
<keyword id="KW-0472">Membrane</keyword>
<keyword id="KW-1185">Reference proteome</keyword>
<keyword id="KW-0808">Transferase</keyword>
<keyword id="KW-0812">Transmembrane</keyword>
<keyword id="KW-1133">Transmembrane helix</keyword>
<evidence type="ECO:0000255" key="1">
    <source>
        <dbReference type="HAMAP-Rule" id="MF_01072"/>
    </source>
</evidence>
<feature type="chain" id="PRO_1000064601" description="Glucans biosynthesis glucosyltransferase H">
    <location>
        <begin position="1"/>
        <end position="842"/>
    </location>
</feature>
<feature type="transmembrane region" description="Helical" evidence="1">
    <location>
        <begin position="140"/>
        <end position="160"/>
    </location>
</feature>
<feature type="transmembrane region" description="Helical" evidence="1">
    <location>
        <begin position="194"/>
        <end position="214"/>
    </location>
</feature>
<feature type="transmembrane region" description="Helical" evidence="1">
    <location>
        <begin position="513"/>
        <end position="533"/>
    </location>
</feature>
<feature type="transmembrane region" description="Helical" evidence="1">
    <location>
        <begin position="570"/>
        <end position="590"/>
    </location>
</feature>
<feature type="transmembrane region" description="Helical" evidence="1">
    <location>
        <begin position="615"/>
        <end position="635"/>
    </location>
</feature>
<feature type="transmembrane region" description="Helical" evidence="1">
    <location>
        <begin position="656"/>
        <end position="676"/>
    </location>
</feature>
<feature type="transmembrane region" description="Helical" evidence="1">
    <location>
        <begin position="680"/>
        <end position="700"/>
    </location>
</feature>
<protein>
    <recommendedName>
        <fullName evidence="1">Glucans biosynthesis glucosyltransferase H</fullName>
        <ecNumber evidence="1">2.4.1.-</ecNumber>
    </recommendedName>
</protein>
<reference key="1">
    <citation type="submission" date="2007-08" db="EMBL/GenBank/DDBJ databases">
        <authorList>
            <consortium name="The Citrobacter koseri Genome Sequencing Project"/>
            <person name="McClelland M."/>
            <person name="Sanderson E.K."/>
            <person name="Porwollik S."/>
            <person name="Spieth J."/>
            <person name="Clifton W.S."/>
            <person name="Latreille P."/>
            <person name="Courtney L."/>
            <person name="Wang C."/>
            <person name="Pepin K."/>
            <person name="Bhonagiri V."/>
            <person name="Nash W."/>
            <person name="Johnson M."/>
            <person name="Thiruvilangam P."/>
            <person name="Wilson R."/>
        </authorList>
    </citation>
    <scope>NUCLEOTIDE SEQUENCE [LARGE SCALE GENOMIC DNA]</scope>
    <source>
        <strain>ATCC BAA-895 / CDC 4225-83 / SGSC4696</strain>
    </source>
</reference>
<gene>
    <name evidence="1" type="primary">mdoH</name>
    <name evidence="1" type="synonym">opgH</name>
    <name type="ordered locus">CKO_02018</name>
</gene>
<comment type="function">
    <text evidence="1">Involved in the biosynthesis of osmoregulated periplasmic glucans (OPGs).</text>
</comment>
<comment type="pathway">
    <text evidence="1">Glycan metabolism; osmoregulated periplasmic glucan (OPG) biosynthesis.</text>
</comment>
<comment type="subcellular location">
    <subcellularLocation>
        <location evidence="1">Cell inner membrane</location>
        <topology evidence="1">Multi-pass membrane protein</topology>
    </subcellularLocation>
</comment>
<comment type="similarity">
    <text evidence="1">Belongs to the glycosyltransferase 2 family. OpgH subfamily.</text>
</comment>
<organism>
    <name type="scientific">Citrobacter koseri (strain ATCC BAA-895 / CDC 4225-83 / SGSC4696)</name>
    <dbReference type="NCBI Taxonomy" id="290338"/>
    <lineage>
        <taxon>Bacteria</taxon>
        <taxon>Pseudomonadati</taxon>
        <taxon>Pseudomonadota</taxon>
        <taxon>Gammaproteobacteria</taxon>
        <taxon>Enterobacterales</taxon>
        <taxon>Enterobacteriaceae</taxon>
        <taxon>Citrobacter</taxon>
    </lineage>
</organism>
<proteinExistence type="inferred from homology"/>
<dbReference type="EC" id="2.4.1.-" evidence="1"/>
<dbReference type="EMBL" id="CP000822">
    <property type="protein sequence ID" value="ABV13144.1"/>
    <property type="molecule type" value="Genomic_DNA"/>
</dbReference>
<dbReference type="RefSeq" id="WP_012132880.1">
    <property type="nucleotide sequence ID" value="NC_009792.1"/>
</dbReference>
<dbReference type="STRING" id="290338.CKO_02018"/>
<dbReference type="CAZy" id="GT2">
    <property type="family name" value="Glycosyltransferase Family 2"/>
</dbReference>
<dbReference type="GeneID" id="45135982"/>
<dbReference type="KEGG" id="cko:CKO_02018"/>
<dbReference type="HOGENOM" id="CLU_015730_1_0_6"/>
<dbReference type="OrthoDB" id="9775281at2"/>
<dbReference type="UniPathway" id="UPA00637"/>
<dbReference type="Proteomes" id="UP000008148">
    <property type="component" value="Chromosome"/>
</dbReference>
<dbReference type="GO" id="GO:0005886">
    <property type="term" value="C:plasma membrane"/>
    <property type="evidence" value="ECO:0007669"/>
    <property type="project" value="UniProtKB-SubCell"/>
</dbReference>
<dbReference type="GO" id="GO:0016758">
    <property type="term" value="F:hexosyltransferase activity"/>
    <property type="evidence" value="ECO:0007669"/>
    <property type="project" value="UniProtKB-UniRule"/>
</dbReference>
<dbReference type="GO" id="GO:0009250">
    <property type="term" value="P:glucan biosynthetic process"/>
    <property type="evidence" value="ECO:0007669"/>
    <property type="project" value="UniProtKB-UniRule"/>
</dbReference>
<dbReference type="CDD" id="cd04191">
    <property type="entry name" value="Glucan_BSP_MdoH"/>
    <property type="match status" value="1"/>
</dbReference>
<dbReference type="FunFam" id="3.90.550.10:FF:000047">
    <property type="entry name" value="Glucans biosynthesis glucosyltransferase H"/>
    <property type="match status" value="1"/>
</dbReference>
<dbReference type="Gene3D" id="3.90.550.10">
    <property type="entry name" value="Spore Coat Polysaccharide Biosynthesis Protein SpsA, Chain A"/>
    <property type="match status" value="1"/>
</dbReference>
<dbReference type="HAMAP" id="MF_01072">
    <property type="entry name" value="MdoH_OpgH"/>
    <property type="match status" value="1"/>
</dbReference>
<dbReference type="InterPro" id="IPR023725">
    <property type="entry name" value="Glucans_biosynth_gluTrFase_H"/>
</dbReference>
<dbReference type="InterPro" id="IPR001173">
    <property type="entry name" value="Glyco_trans_2-like"/>
</dbReference>
<dbReference type="InterPro" id="IPR050321">
    <property type="entry name" value="Glycosyltr_2/OpgH_subfam"/>
</dbReference>
<dbReference type="InterPro" id="IPR029044">
    <property type="entry name" value="Nucleotide-diphossugar_trans"/>
</dbReference>
<dbReference type="NCBIfam" id="NF003955">
    <property type="entry name" value="PRK05454.1-1"/>
    <property type="match status" value="1"/>
</dbReference>
<dbReference type="NCBIfam" id="NF003958">
    <property type="entry name" value="PRK05454.2-1"/>
    <property type="match status" value="1"/>
</dbReference>
<dbReference type="NCBIfam" id="NF003962">
    <property type="entry name" value="PRK05454.2-5"/>
    <property type="match status" value="1"/>
</dbReference>
<dbReference type="PANTHER" id="PTHR43867">
    <property type="entry name" value="CELLULOSE SYNTHASE CATALYTIC SUBUNIT A [UDP-FORMING]"/>
    <property type="match status" value="1"/>
</dbReference>
<dbReference type="PANTHER" id="PTHR43867:SF5">
    <property type="entry name" value="GLUCANS BIOSYNTHESIS GLUCOSYLTRANSFERASE H"/>
    <property type="match status" value="1"/>
</dbReference>
<dbReference type="Pfam" id="PF00535">
    <property type="entry name" value="Glycos_transf_2"/>
    <property type="match status" value="1"/>
</dbReference>
<dbReference type="SUPFAM" id="SSF53448">
    <property type="entry name" value="Nucleotide-diphospho-sugar transferases"/>
    <property type="match status" value="1"/>
</dbReference>
<name>OPGH_CITK8</name>
<sequence>MNKTTEYIDAMPLSDIEKAALPKTDIRAVHEALDVEHRAYSREDDSPQGSVKARLEQAWPDSLAEGQLIKDNEGRDQLQAMPKATRSSMFPDPWRTNPLGRFWDRLRGRDVTPRYLSRLTKEEQENEQKWRTVGTIRRYILLLLTLAQTVVATWYMKTILPYQGWALINPADMIGQDLWVSFMQLLPYVLQTGILILFAVLFCWVSAGFWTALMGFLQLLIGRDKYSISASTVGNEPLNPEHRTALIMPICNEDVDRVFAGLRATWESVKATGNAAHFDVYILSDSYNPDICVAEQKAWMELIAEVQGEGQIFYRRRRRRVKRKSGNIDDFCRRWGNQYSYMVVLDADSVMTGECLSGLVRLMEANPNAGIIQSSPKASGMDTLYARCQQFATRVYGPLFTAGLHFWQLGESHYWGHNAIIRVKPFIEHCALAPLPGEGSFAGSILSHDFVEAALMRRAGWGVWIAYDLPGSYEELPPNLLDELKRDRRWCHGNLMNFRLFLVKGMHPVHRAVFLTGVMSYLSAPLWFMFLALSTALQVVHALTEPQYFLQPRQLFPVWPQWRPELAIALFASTMVLLFLPKLLSIMLIWCKGTKEYGGFVRVTLSLLLEVLFSVLLAPVRMLFHTVFVVSAFLGWEVVWNSPQRDDDSTPWGEAFMRHGSQLLLGLVWAVGMAWLDLRFLFWLAPIVFSLILSPFVSVVSSRSTVGLRTKRWKLFLIPEEYSPPQVLVDTDKYLAMNRNRTLDDGFMHAVFNPSFNALATAMATARHRASKVLEIARDRHVEQALNETPEKLNRDRRLVLLSDPVTMARLHYRVWNSPERYSSWVNYYQGINLNPLALQKK</sequence>
<accession>A8AI31</accession>